<proteinExistence type="inferred from homology"/>
<dbReference type="EMBL" id="CP001087">
    <property type="protein sequence ID" value="ACN16676.1"/>
    <property type="molecule type" value="Genomic_DNA"/>
</dbReference>
<dbReference type="RefSeq" id="WP_015905426.1">
    <property type="nucleotide sequence ID" value="NC_012108.1"/>
</dbReference>
<dbReference type="SMR" id="C0Q9V8"/>
<dbReference type="STRING" id="177437.HRM2_36110"/>
<dbReference type="KEGG" id="dat:HRM2_36110"/>
<dbReference type="eggNOG" id="COG0097">
    <property type="taxonomic scope" value="Bacteria"/>
</dbReference>
<dbReference type="HOGENOM" id="CLU_065464_1_2_7"/>
<dbReference type="OrthoDB" id="9805007at2"/>
<dbReference type="Proteomes" id="UP000000442">
    <property type="component" value="Chromosome"/>
</dbReference>
<dbReference type="GO" id="GO:0022625">
    <property type="term" value="C:cytosolic large ribosomal subunit"/>
    <property type="evidence" value="ECO:0007669"/>
    <property type="project" value="TreeGrafter"/>
</dbReference>
<dbReference type="GO" id="GO:0019843">
    <property type="term" value="F:rRNA binding"/>
    <property type="evidence" value="ECO:0007669"/>
    <property type="project" value="UniProtKB-UniRule"/>
</dbReference>
<dbReference type="GO" id="GO:0003735">
    <property type="term" value="F:structural constituent of ribosome"/>
    <property type="evidence" value="ECO:0007669"/>
    <property type="project" value="InterPro"/>
</dbReference>
<dbReference type="GO" id="GO:0002181">
    <property type="term" value="P:cytoplasmic translation"/>
    <property type="evidence" value="ECO:0007669"/>
    <property type="project" value="TreeGrafter"/>
</dbReference>
<dbReference type="FunFam" id="3.90.930.12:FF:000001">
    <property type="entry name" value="50S ribosomal protein L6"/>
    <property type="match status" value="1"/>
</dbReference>
<dbReference type="FunFam" id="3.90.930.12:FF:000002">
    <property type="entry name" value="50S ribosomal protein L6"/>
    <property type="match status" value="1"/>
</dbReference>
<dbReference type="Gene3D" id="3.90.930.12">
    <property type="entry name" value="Ribosomal protein L6, alpha-beta domain"/>
    <property type="match status" value="2"/>
</dbReference>
<dbReference type="HAMAP" id="MF_01365_B">
    <property type="entry name" value="Ribosomal_uL6_B"/>
    <property type="match status" value="1"/>
</dbReference>
<dbReference type="InterPro" id="IPR000702">
    <property type="entry name" value="Ribosomal_uL6-like"/>
</dbReference>
<dbReference type="InterPro" id="IPR036789">
    <property type="entry name" value="Ribosomal_uL6-like_a/b-dom_sf"/>
</dbReference>
<dbReference type="InterPro" id="IPR020040">
    <property type="entry name" value="Ribosomal_uL6_a/b-dom"/>
</dbReference>
<dbReference type="InterPro" id="IPR019906">
    <property type="entry name" value="Ribosomal_uL6_bac-type"/>
</dbReference>
<dbReference type="InterPro" id="IPR002358">
    <property type="entry name" value="Ribosomal_uL6_CS"/>
</dbReference>
<dbReference type="NCBIfam" id="TIGR03654">
    <property type="entry name" value="L6_bact"/>
    <property type="match status" value="1"/>
</dbReference>
<dbReference type="PANTHER" id="PTHR11655">
    <property type="entry name" value="60S/50S RIBOSOMAL PROTEIN L6/L9"/>
    <property type="match status" value="1"/>
</dbReference>
<dbReference type="PANTHER" id="PTHR11655:SF14">
    <property type="entry name" value="LARGE RIBOSOMAL SUBUNIT PROTEIN UL6M"/>
    <property type="match status" value="1"/>
</dbReference>
<dbReference type="Pfam" id="PF00347">
    <property type="entry name" value="Ribosomal_L6"/>
    <property type="match status" value="2"/>
</dbReference>
<dbReference type="PIRSF" id="PIRSF002162">
    <property type="entry name" value="Ribosomal_L6"/>
    <property type="match status" value="1"/>
</dbReference>
<dbReference type="PRINTS" id="PR00059">
    <property type="entry name" value="RIBOSOMALL6"/>
</dbReference>
<dbReference type="SUPFAM" id="SSF56053">
    <property type="entry name" value="Ribosomal protein L6"/>
    <property type="match status" value="2"/>
</dbReference>
<dbReference type="PROSITE" id="PS00525">
    <property type="entry name" value="RIBOSOMAL_L6_1"/>
    <property type="match status" value="1"/>
</dbReference>
<organism>
    <name type="scientific">Desulforapulum autotrophicum (strain ATCC 43914 / DSM 3382 / VKM B-1955 / HRM2)</name>
    <name type="common">Desulfobacterium autotrophicum</name>
    <dbReference type="NCBI Taxonomy" id="177437"/>
    <lineage>
        <taxon>Bacteria</taxon>
        <taxon>Pseudomonadati</taxon>
        <taxon>Thermodesulfobacteriota</taxon>
        <taxon>Desulfobacteria</taxon>
        <taxon>Desulfobacterales</taxon>
        <taxon>Desulfobacteraceae</taxon>
        <taxon>Desulforapulum</taxon>
    </lineage>
</organism>
<name>RL6_DESAH</name>
<feature type="chain" id="PRO_1000214923" description="Large ribosomal subunit protein uL6">
    <location>
        <begin position="1"/>
        <end position="180"/>
    </location>
</feature>
<keyword id="KW-1185">Reference proteome</keyword>
<keyword id="KW-0687">Ribonucleoprotein</keyword>
<keyword id="KW-0689">Ribosomal protein</keyword>
<keyword id="KW-0694">RNA-binding</keyword>
<keyword id="KW-0699">rRNA-binding</keyword>
<gene>
    <name evidence="1" type="primary">rplF</name>
    <name type="ordered locus">HRM2_36110</name>
</gene>
<comment type="function">
    <text evidence="1">This protein binds to the 23S rRNA, and is important in its secondary structure. It is located near the subunit interface in the base of the L7/L12 stalk, and near the tRNA binding site of the peptidyltransferase center.</text>
</comment>
<comment type="subunit">
    <text evidence="1">Part of the 50S ribosomal subunit.</text>
</comment>
<comment type="similarity">
    <text evidence="1">Belongs to the universal ribosomal protein uL6 family.</text>
</comment>
<sequence>MSRIGKKPVQIPEKVEVSVKGDLISIKGPKGSLDRSLHPAVKLAIENGMVNVSVTDDQDRKTVALQGLFRSLVANMITGVSVGYEKKLLLNGIGYRAEVNGNTVVLNVGYSNPVNFELPKGISALVEKNTTLSLSGIDKEIVGETAARIRRIRPPEPYKGKGIMYSDERIIKKAGKAAAK</sequence>
<evidence type="ECO:0000255" key="1">
    <source>
        <dbReference type="HAMAP-Rule" id="MF_01365"/>
    </source>
</evidence>
<evidence type="ECO:0000305" key="2"/>
<protein>
    <recommendedName>
        <fullName evidence="1">Large ribosomal subunit protein uL6</fullName>
    </recommendedName>
    <alternativeName>
        <fullName evidence="2">50S ribosomal protein L6</fullName>
    </alternativeName>
</protein>
<reference key="1">
    <citation type="journal article" date="2009" name="Environ. Microbiol.">
        <title>Genome sequence of Desulfobacterium autotrophicum HRM2, a marine sulfate reducer oxidizing organic carbon completely to carbon dioxide.</title>
        <authorList>
            <person name="Strittmatter A.W."/>
            <person name="Liesegang H."/>
            <person name="Rabus R."/>
            <person name="Decker I."/>
            <person name="Amann J."/>
            <person name="Andres S."/>
            <person name="Henne A."/>
            <person name="Fricke W.F."/>
            <person name="Martinez-Arias R."/>
            <person name="Bartels D."/>
            <person name="Goesmann A."/>
            <person name="Krause L."/>
            <person name="Puehler A."/>
            <person name="Klenk H.P."/>
            <person name="Richter M."/>
            <person name="Schuler M."/>
            <person name="Gloeckner F.O."/>
            <person name="Meyerdierks A."/>
            <person name="Gottschalk G."/>
            <person name="Amann R."/>
        </authorList>
    </citation>
    <scope>NUCLEOTIDE SEQUENCE [LARGE SCALE GENOMIC DNA]</scope>
    <source>
        <strain>ATCC 43914 / DSM 3382 / VKM B-1955 / HRM2</strain>
    </source>
</reference>
<accession>C0Q9V8</accession>